<reference key="1">
    <citation type="journal article" date="2000" name="DNA Res.">
        <title>Complete genome structure of the nitrogen-fixing symbiotic bacterium Mesorhizobium loti.</title>
        <authorList>
            <person name="Kaneko T."/>
            <person name="Nakamura Y."/>
            <person name="Sato S."/>
            <person name="Asamizu E."/>
            <person name="Kato T."/>
            <person name="Sasamoto S."/>
            <person name="Watanabe A."/>
            <person name="Idesawa K."/>
            <person name="Ishikawa A."/>
            <person name="Kawashima K."/>
            <person name="Kimura T."/>
            <person name="Kishida Y."/>
            <person name="Kiyokawa C."/>
            <person name="Kohara M."/>
            <person name="Matsumoto M."/>
            <person name="Matsuno A."/>
            <person name="Mochizuki Y."/>
            <person name="Nakayama S."/>
            <person name="Nakazaki N."/>
            <person name="Shimpo S."/>
            <person name="Sugimoto M."/>
            <person name="Takeuchi C."/>
            <person name="Yamada M."/>
            <person name="Tabata S."/>
        </authorList>
    </citation>
    <scope>NUCLEOTIDE SEQUENCE [LARGE SCALE GENOMIC DNA]</scope>
    <source>
        <strain>LMG 29417 / CECT 9101 / MAFF 303099</strain>
    </source>
</reference>
<organism>
    <name type="scientific">Mesorhizobium japonicum (strain LMG 29417 / CECT 9101 / MAFF 303099)</name>
    <name type="common">Mesorhizobium loti (strain MAFF 303099)</name>
    <dbReference type="NCBI Taxonomy" id="266835"/>
    <lineage>
        <taxon>Bacteria</taxon>
        <taxon>Pseudomonadati</taxon>
        <taxon>Pseudomonadota</taxon>
        <taxon>Alphaproteobacteria</taxon>
        <taxon>Hyphomicrobiales</taxon>
        <taxon>Phyllobacteriaceae</taxon>
        <taxon>Mesorhizobium</taxon>
    </lineage>
</organism>
<name>HSS_RHILO</name>
<feature type="chain" id="PRO_0000084083" description="Homospermidine synthase">
    <location>
        <begin position="1"/>
        <end position="485"/>
    </location>
</feature>
<comment type="function">
    <text evidence="1">Involved in the NAD(+)-dependent synthesis of the polyamine homospermidine from putrescine.</text>
</comment>
<comment type="catalytic activity">
    <reaction>
        <text>2 putrescine = sym-homospermidine + NH4(+)</text>
        <dbReference type="Rhea" id="RHEA:18645"/>
        <dbReference type="ChEBI" id="CHEBI:28938"/>
        <dbReference type="ChEBI" id="CHEBI:57811"/>
        <dbReference type="ChEBI" id="CHEBI:326268"/>
        <dbReference type="EC" id="2.5.1.44"/>
    </reaction>
</comment>
<comment type="catalytic activity">
    <reaction>
        <text>putrescine + spermidine = sym-homospermidine + propane-1,3-diamine</text>
        <dbReference type="Rhea" id="RHEA:11236"/>
        <dbReference type="ChEBI" id="CHEBI:57484"/>
        <dbReference type="ChEBI" id="CHEBI:57811"/>
        <dbReference type="ChEBI" id="CHEBI:57834"/>
        <dbReference type="ChEBI" id="CHEBI:326268"/>
        <dbReference type="EC" id="2.5.1.44"/>
    </reaction>
</comment>
<comment type="cofactor">
    <cofactor evidence="1">
        <name>NAD(+)</name>
        <dbReference type="ChEBI" id="CHEBI:57540"/>
    </cofactor>
</comment>
<comment type="similarity">
    <text evidence="2">Belongs to the saccharopine dehydrogenase family.</text>
</comment>
<dbReference type="EC" id="2.5.1.44"/>
<dbReference type="EMBL" id="BA000012">
    <property type="protein sequence ID" value="BAB50002.1"/>
    <property type="molecule type" value="Genomic_DNA"/>
</dbReference>
<dbReference type="SMR" id="Q98H64"/>
<dbReference type="KEGG" id="mlo:mlr3014"/>
<dbReference type="eggNOG" id="COG5310">
    <property type="taxonomic scope" value="Bacteria"/>
</dbReference>
<dbReference type="HOGENOM" id="CLU_046538_0_0_5"/>
<dbReference type="Proteomes" id="UP000000552">
    <property type="component" value="Chromosome"/>
</dbReference>
<dbReference type="GO" id="GO:0050514">
    <property type="term" value="F:homospermidine synthase (spermidine-specific) activity"/>
    <property type="evidence" value="ECO:0007669"/>
    <property type="project" value="RHEA"/>
</dbReference>
<dbReference type="GO" id="GO:0047296">
    <property type="term" value="F:homospermidine synthase activity"/>
    <property type="evidence" value="ECO:0007669"/>
    <property type="project" value="UniProtKB-EC"/>
</dbReference>
<dbReference type="Gene3D" id="3.30.360.30">
    <property type="entry name" value="homospermidine synthase like"/>
    <property type="match status" value="1"/>
</dbReference>
<dbReference type="Gene3D" id="3.40.50.720">
    <property type="entry name" value="NAD(P)-binding Rossmann-like Domain"/>
    <property type="match status" value="1"/>
</dbReference>
<dbReference type="InterPro" id="IPR023181">
    <property type="entry name" value="Homospermid_syn-like_C"/>
</dbReference>
<dbReference type="InterPro" id="IPR032095">
    <property type="entry name" value="Sacchrp_dh-like_C"/>
</dbReference>
<dbReference type="InterPro" id="IPR005097">
    <property type="entry name" value="Sacchrp_dh_NADP-bd"/>
</dbReference>
<dbReference type="Pfam" id="PF16653">
    <property type="entry name" value="Sacchrp_dh_C"/>
    <property type="match status" value="1"/>
</dbReference>
<dbReference type="Pfam" id="PF03435">
    <property type="entry name" value="Sacchrp_dh_NADP"/>
    <property type="match status" value="1"/>
</dbReference>
<proteinExistence type="inferred from homology"/>
<keyword id="KW-0520">NAD</keyword>
<keyword id="KW-0808">Transferase</keyword>
<protein>
    <recommendedName>
        <fullName>Homospermidine synthase</fullName>
        <shortName>HSS</shortName>
        <ecNumber>2.5.1.44</ecNumber>
    </recommendedName>
</protein>
<gene>
    <name type="primary">hss</name>
    <name type="ordered locus">mlr3014</name>
</gene>
<evidence type="ECO:0000250" key="1"/>
<evidence type="ECO:0000305" key="2"/>
<sequence>MLDKMANENWPVYGEITGPVVMIGFGSIGRGTLPLIERHFKFDKSRMTVLDPRDTDRKLLDERGIAFVQEAVTENNYKKLLTPLLTNGGGQGFCVNLSVDTGSVDLMRLCRKLGVLYIDTVVEPWLGFYFDAKADNASRTNYALREAMIKEKHDKPGGATVVSTCGANPGMVSWFVKQALVNLATDLGLEFSEPAQEDREGWAKLMKKAGVKGIHIAERDTQRTKKPKPMDVFWNTWSVEGFISEGLQPAELGWGTHEKWMPKNGKKHKHGSKAAIYLEQPGANTRVRSWCPTPGAQYGLLVTHNEAISIADFFTVRSKKGKVQYRPTCHYAYHPSNDAMLSLDEMFGAAGKPQPVHHVLDENELVDGVDELGVLLYGHDKNAYWYGSQLSLAEARKLAPYQNATGMQVTSAVLAGMVWALENPDAGIVEADEMDYKRCLDVQSPYLGPVKGYYTDWTPLDRRPGLFPEDLDRSDPWQFRNILVR</sequence>
<accession>Q98H64</accession>